<name>SHBG_CROCR</name>
<accession>A0EQL2</accession>
<reference key="1">
    <citation type="submission" date="2005-11" db="EMBL/GenBank/DDBJ databases">
        <title>Unusual steroid-binding properties of hyena sex hormone-binding globulin.</title>
        <authorList>
            <person name="Miguel-Queralt S."/>
            <person name="Yalcinkaya T.M."/>
            <person name="Avvakumov G.V."/>
            <person name="Place N."/>
            <person name="Siiteri P.K."/>
            <person name="Glickman S.E."/>
            <person name="Hammond G.L."/>
        </authorList>
    </citation>
    <scope>NUCLEOTIDE SEQUENCE [MRNA]</scope>
</reference>
<proteinExistence type="evidence at transcript level"/>
<feature type="signal peptide" evidence="2">
    <location>
        <begin position="1"/>
        <end position="27"/>
    </location>
</feature>
<feature type="chain" id="PRO_0000278833" description="Sex hormone-binding globulin">
    <location>
        <begin position="28"/>
        <end position="393"/>
    </location>
</feature>
<feature type="domain" description="Laminin G-like 1" evidence="3">
    <location>
        <begin position="35"/>
        <end position="208"/>
    </location>
</feature>
<feature type="domain" description="Laminin G-like 2" evidence="3">
    <location>
        <begin position="215"/>
        <end position="381"/>
    </location>
</feature>
<feature type="glycosylation site" description="N-linked (GlcNAc...) asparagine" evidence="2">
    <location>
        <position position="371"/>
    </location>
</feature>
<feature type="glycosylation site" description="N-linked (GlcNAc...) asparagine" evidence="2">
    <location>
        <position position="387"/>
    </location>
</feature>
<feature type="disulfide bond" evidence="3">
    <location>
        <begin position="183"/>
        <end position="208"/>
    </location>
</feature>
<feature type="disulfide bond" evidence="3">
    <location>
        <begin position="353"/>
        <end position="381"/>
    </location>
</feature>
<protein>
    <recommendedName>
        <fullName>Sex hormone-binding globulin</fullName>
        <shortName>SHBG</shortName>
    </recommendedName>
</protein>
<keyword id="KW-1015">Disulfide bond</keyword>
<keyword id="KW-0325">Glycoprotein</keyword>
<keyword id="KW-0446">Lipid-binding</keyword>
<keyword id="KW-0677">Repeat</keyword>
<keyword id="KW-0964">Secreted</keyword>
<keyword id="KW-0732">Signal</keyword>
<keyword id="KW-0754">Steroid-binding</keyword>
<dbReference type="EMBL" id="DQ285473">
    <property type="protein sequence ID" value="ABB89081.1"/>
    <property type="molecule type" value="mRNA"/>
</dbReference>
<dbReference type="SMR" id="A0EQL2"/>
<dbReference type="GlyCosmos" id="A0EQL2">
    <property type="glycosylation" value="2 sites, No reported glycans"/>
</dbReference>
<dbReference type="OrthoDB" id="6275838at2759"/>
<dbReference type="GO" id="GO:0005576">
    <property type="term" value="C:extracellular region"/>
    <property type="evidence" value="ECO:0007669"/>
    <property type="project" value="UniProtKB-SubCell"/>
</dbReference>
<dbReference type="GO" id="GO:0005496">
    <property type="term" value="F:steroid binding"/>
    <property type="evidence" value="ECO:0007669"/>
    <property type="project" value="UniProtKB-KW"/>
</dbReference>
<dbReference type="CDD" id="cd00110">
    <property type="entry name" value="LamG"/>
    <property type="match status" value="1"/>
</dbReference>
<dbReference type="FunFam" id="2.60.120.200:FF:000107">
    <property type="entry name" value="Sex hormone-binding globulin"/>
    <property type="match status" value="1"/>
</dbReference>
<dbReference type="Gene3D" id="2.60.120.200">
    <property type="match status" value="2"/>
</dbReference>
<dbReference type="InterPro" id="IPR013320">
    <property type="entry name" value="ConA-like_dom_sf"/>
</dbReference>
<dbReference type="InterPro" id="IPR051145">
    <property type="entry name" value="GAS-SHBG-PROS"/>
</dbReference>
<dbReference type="InterPro" id="IPR001791">
    <property type="entry name" value="Laminin_G"/>
</dbReference>
<dbReference type="PANTHER" id="PTHR24040">
    <property type="entry name" value="LAMININ G-LIKE DOMAIN-CONTAINING PROTEIN"/>
    <property type="match status" value="1"/>
</dbReference>
<dbReference type="PANTHER" id="PTHR24040:SF3">
    <property type="entry name" value="SEX HORMONE-BINDING GLOBULIN"/>
    <property type="match status" value="1"/>
</dbReference>
<dbReference type="Pfam" id="PF00054">
    <property type="entry name" value="Laminin_G_1"/>
    <property type="match status" value="1"/>
</dbReference>
<dbReference type="SMART" id="SM00282">
    <property type="entry name" value="LamG"/>
    <property type="match status" value="1"/>
</dbReference>
<dbReference type="SUPFAM" id="SSF49899">
    <property type="entry name" value="Concanavalin A-like lectins/glucanases"/>
    <property type="match status" value="2"/>
</dbReference>
<dbReference type="PROSITE" id="PS50025">
    <property type="entry name" value="LAM_G_DOMAIN"/>
    <property type="match status" value="1"/>
</dbReference>
<gene>
    <name type="primary">SHBG</name>
</gene>
<evidence type="ECO:0000250" key="1"/>
<evidence type="ECO:0000255" key="2"/>
<evidence type="ECO:0000255" key="3">
    <source>
        <dbReference type="PROSITE-ProRule" id="PRU00122"/>
    </source>
</evidence>
<comment type="function">
    <text evidence="1">Functions as an androgen transport protein, but may also be involved in receptor mediated processes. Each dimer binds one molecule of steroid. Specific for 5-alpha-dihydrotestosterone, testosterone, and 17-beta-estradiol. Regulates the plasma metabolic clearance rate of steroid hormones by controlling their plasma concentration (By similarity).</text>
</comment>
<comment type="subunit">
    <text evidence="1">Homodimer.</text>
</comment>
<comment type="subcellular location">
    <subcellularLocation>
        <location evidence="1">Secreted</location>
    </subcellularLocation>
    <text evidence="1">In testis, it is synthesized by the Sertoli cells, secreted into the lumen of the seminiferous tubule and transported to the epididymis.</text>
</comment>
<sequence>MEGRGPLATSPRRRWLLLLLLLPHSHQRIQDPPAVHLSSASGQGPVTIMTFDFTKMRKTSSSFELRTWDPEGVILYGDTDPHEDWFMLGLRGGRPEIQIHNHVARLTVGAGPRLDDGKWHQVEVKVLGDLLLLTVDGEEVLCLKQVFGPLASRPQPVVRIAVGGLPFPPSSLRLPLVPALDGCVRRGSWLDHQAQTSVSALSGSPRSCGVESQPGSFFPPGAHAEFSLQDLPQPHAEPWAFSLDLGLQLAAGSGHLLALGTPENPPRLSLQLQDQKVVLSSAWGPQLHLPLVLGAPLQLKLAASGVTLSQGPETEILALPLSDPGSLLNLWVQPHARLFLGALPGEAASASFCLDGLWAQGQKLDMDRALNRSQNIWTHSCPQSLGNDTDTTH</sequence>
<organism>
    <name type="scientific">Crocuta crocuta</name>
    <name type="common">Spotted hyena</name>
    <dbReference type="NCBI Taxonomy" id="9678"/>
    <lineage>
        <taxon>Eukaryota</taxon>
        <taxon>Metazoa</taxon>
        <taxon>Chordata</taxon>
        <taxon>Craniata</taxon>
        <taxon>Vertebrata</taxon>
        <taxon>Euteleostomi</taxon>
        <taxon>Mammalia</taxon>
        <taxon>Eutheria</taxon>
        <taxon>Laurasiatheria</taxon>
        <taxon>Carnivora</taxon>
        <taxon>Feliformia</taxon>
        <taxon>Hyaenidae</taxon>
        <taxon>Crocuta</taxon>
    </lineage>
</organism>